<dbReference type="EMBL" id="BA000023">
    <property type="protein sequence ID" value="BAB66439.1"/>
    <property type="molecule type" value="Genomic_DNA"/>
</dbReference>
<dbReference type="RefSeq" id="WP_010979417.1">
    <property type="nucleotide sequence ID" value="NC_003106.2"/>
</dbReference>
<dbReference type="SMR" id="Q971I1"/>
<dbReference type="STRING" id="273063.STK_13727"/>
<dbReference type="KEGG" id="sto:STK_13727"/>
<dbReference type="PATRIC" id="fig|273063.9.peg.1571"/>
<dbReference type="eggNOG" id="arCOG04177">
    <property type="taxonomic scope" value="Archaea"/>
</dbReference>
<dbReference type="OrthoDB" id="65887at2157"/>
<dbReference type="Proteomes" id="UP000001015">
    <property type="component" value="Chromosome"/>
</dbReference>
<dbReference type="GO" id="GO:1990904">
    <property type="term" value="C:ribonucleoprotein complex"/>
    <property type="evidence" value="ECO:0007669"/>
    <property type="project" value="UniProtKB-KW"/>
</dbReference>
<dbReference type="GO" id="GO:0005840">
    <property type="term" value="C:ribosome"/>
    <property type="evidence" value="ECO:0007669"/>
    <property type="project" value="UniProtKB-KW"/>
</dbReference>
<dbReference type="GO" id="GO:0003735">
    <property type="term" value="F:structural constituent of ribosome"/>
    <property type="evidence" value="ECO:0007669"/>
    <property type="project" value="InterPro"/>
</dbReference>
<dbReference type="GO" id="GO:0006412">
    <property type="term" value="P:translation"/>
    <property type="evidence" value="ECO:0007669"/>
    <property type="project" value="UniProtKB-UniRule"/>
</dbReference>
<dbReference type="FunFam" id="1.10.1620.10:FF:000001">
    <property type="entry name" value="60S ribosomal protein-like L39"/>
    <property type="match status" value="1"/>
</dbReference>
<dbReference type="Gene3D" id="1.10.1620.10">
    <property type="entry name" value="Ribosomal protein L39e"/>
    <property type="match status" value="1"/>
</dbReference>
<dbReference type="HAMAP" id="MF_00629">
    <property type="entry name" value="Ribosomal_eL39"/>
    <property type="match status" value="1"/>
</dbReference>
<dbReference type="InterPro" id="IPR000077">
    <property type="entry name" value="Ribosomal_eL39"/>
</dbReference>
<dbReference type="InterPro" id="IPR020083">
    <property type="entry name" value="Ribosomal_eL39_CS"/>
</dbReference>
<dbReference type="InterPro" id="IPR023626">
    <property type="entry name" value="Ribosomal_eL39_dom_sf"/>
</dbReference>
<dbReference type="NCBIfam" id="NF002316">
    <property type="entry name" value="PRK01242.1"/>
    <property type="match status" value="1"/>
</dbReference>
<dbReference type="Pfam" id="PF00832">
    <property type="entry name" value="Ribosomal_L39"/>
    <property type="match status" value="1"/>
</dbReference>
<dbReference type="SUPFAM" id="SSF48662">
    <property type="entry name" value="Ribosomal protein L39e"/>
    <property type="match status" value="1"/>
</dbReference>
<dbReference type="PROSITE" id="PS00051">
    <property type="entry name" value="RIBOSOMAL_L39E"/>
    <property type="match status" value="1"/>
</dbReference>
<gene>
    <name evidence="1" type="primary">rpl39e</name>
    <name type="ordered locus">STK_13727</name>
    <name type="ORF">STS169</name>
</gene>
<organism>
    <name type="scientific">Sulfurisphaera tokodaii (strain DSM 16993 / JCM 10545 / NBRC 100140 / 7)</name>
    <name type="common">Sulfolobus tokodaii</name>
    <dbReference type="NCBI Taxonomy" id="273063"/>
    <lineage>
        <taxon>Archaea</taxon>
        <taxon>Thermoproteota</taxon>
        <taxon>Thermoprotei</taxon>
        <taxon>Sulfolobales</taxon>
        <taxon>Sulfolobaceae</taxon>
        <taxon>Sulfurisphaera</taxon>
    </lineage>
</organism>
<comment type="similarity">
    <text evidence="1">Belongs to the eukaryotic ribosomal protein eL39 family.</text>
</comment>
<feature type="chain" id="PRO_0000127063" description="Large ribosomal subunit protein eL39">
    <location>
        <begin position="1"/>
        <end position="51"/>
    </location>
</feature>
<name>RL39_SULTO</name>
<accession>Q971I1</accession>
<evidence type="ECO:0000255" key="1">
    <source>
        <dbReference type="HAMAP-Rule" id="MF_00629"/>
    </source>
</evidence>
<evidence type="ECO:0000305" key="2"/>
<keyword id="KW-1185">Reference proteome</keyword>
<keyword id="KW-0687">Ribonucleoprotein</keyword>
<keyword id="KW-0689">Ribosomal protein</keyword>
<reference key="1">
    <citation type="journal article" date="2001" name="DNA Res.">
        <title>Complete genome sequence of an aerobic thermoacidophilic Crenarchaeon, Sulfolobus tokodaii strain7.</title>
        <authorList>
            <person name="Kawarabayasi Y."/>
            <person name="Hino Y."/>
            <person name="Horikawa H."/>
            <person name="Jin-no K."/>
            <person name="Takahashi M."/>
            <person name="Sekine M."/>
            <person name="Baba S."/>
            <person name="Ankai A."/>
            <person name="Kosugi H."/>
            <person name="Hosoyama A."/>
            <person name="Fukui S."/>
            <person name="Nagai Y."/>
            <person name="Nishijima K."/>
            <person name="Otsuka R."/>
            <person name="Nakazawa H."/>
            <person name="Takamiya M."/>
            <person name="Kato Y."/>
            <person name="Yoshizawa T."/>
            <person name="Tanaka T."/>
            <person name="Kudoh Y."/>
            <person name="Yamazaki J."/>
            <person name="Kushida N."/>
            <person name="Oguchi A."/>
            <person name="Aoki K."/>
            <person name="Masuda S."/>
            <person name="Yanagii M."/>
            <person name="Nishimura M."/>
            <person name="Yamagishi A."/>
            <person name="Oshima T."/>
            <person name="Kikuchi H."/>
        </authorList>
    </citation>
    <scope>NUCLEOTIDE SEQUENCE [LARGE SCALE GENOMIC DNA]</scope>
    <source>
        <strain>DSM 16993 / JCM 10545 / NBRC 100140 / 7</strain>
    </source>
</reference>
<proteinExistence type="inferred from homology"/>
<sequence>MSKNKPLGRKLRLARALKSNSPVPAWVIIKTNGKFRYNFHRRDWRRNDLKV</sequence>
<protein>
    <recommendedName>
        <fullName evidence="1">Large ribosomal subunit protein eL39</fullName>
    </recommendedName>
    <alternativeName>
        <fullName evidence="2">50S ribosomal protein L39e</fullName>
    </alternativeName>
</protein>